<sequence length="222" mass="24771">MPSLSKEAALVHDALVARGLETPLRPPMDELDNETRKSLIAGHMTEIMQLLNLDLSDDSLMETPHRIAKMYVDEIFAGLDYANFPKITLIENKMKVDEMVTVRDITLTSTCEHHFVTIDGKATVAYIPKDSVIGLSKINRIVQFFAQRPQVQERLTQQILTALQTLLGTNNVAVSIDAVHYCVKARGIRDATSATTTTSLGGLFKSSQNTRQEFLRAVRHHP</sequence>
<feature type="chain" id="PRO_1000078148" description="GTP cyclohydrolase 1">
    <location>
        <begin position="1"/>
        <end position="222"/>
    </location>
</feature>
<feature type="binding site" evidence="1">
    <location>
        <position position="111"/>
    </location>
    <ligand>
        <name>Zn(2+)</name>
        <dbReference type="ChEBI" id="CHEBI:29105"/>
    </ligand>
</feature>
<feature type="binding site" evidence="1">
    <location>
        <position position="114"/>
    </location>
    <ligand>
        <name>Zn(2+)</name>
        <dbReference type="ChEBI" id="CHEBI:29105"/>
    </ligand>
</feature>
<feature type="binding site" evidence="1">
    <location>
        <position position="182"/>
    </location>
    <ligand>
        <name>Zn(2+)</name>
        <dbReference type="ChEBI" id="CHEBI:29105"/>
    </ligand>
</feature>
<evidence type="ECO:0000255" key="1">
    <source>
        <dbReference type="HAMAP-Rule" id="MF_00223"/>
    </source>
</evidence>
<protein>
    <recommendedName>
        <fullName evidence="1">GTP cyclohydrolase 1</fullName>
        <ecNumber evidence="1">3.5.4.16</ecNumber>
    </recommendedName>
    <alternativeName>
        <fullName evidence="1">GTP cyclohydrolase I</fullName>
        <shortName evidence="1">GTP-CH-I</shortName>
    </alternativeName>
</protein>
<gene>
    <name evidence="1" type="primary">folE</name>
    <name type="ordered locus">SARI_00699</name>
</gene>
<keyword id="KW-0342">GTP-binding</keyword>
<keyword id="KW-0378">Hydrolase</keyword>
<keyword id="KW-0479">Metal-binding</keyword>
<keyword id="KW-0547">Nucleotide-binding</keyword>
<keyword id="KW-0554">One-carbon metabolism</keyword>
<keyword id="KW-1185">Reference proteome</keyword>
<keyword id="KW-0862">Zinc</keyword>
<proteinExistence type="inferred from homology"/>
<reference key="1">
    <citation type="submission" date="2007-11" db="EMBL/GenBank/DDBJ databases">
        <authorList>
            <consortium name="The Salmonella enterica serovar Arizonae Genome Sequencing Project"/>
            <person name="McClelland M."/>
            <person name="Sanderson E.K."/>
            <person name="Porwollik S."/>
            <person name="Spieth J."/>
            <person name="Clifton W.S."/>
            <person name="Fulton R."/>
            <person name="Chunyan W."/>
            <person name="Wollam A."/>
            <person name="Shah N."/>
            <person name="Pepin K."/>
            <person name="Bhonagiri V."/>
            <person name="Nash W."/>
            <person name="Johnson M."/>
            <person name="Thiruvilangam P."/>
            <person name="Wilson R."/>
        </authorList>
    </citation>
    <scope>NUCLEOTIDE SEQUENCE [LARGE SCALE GENOMIC DNA]</scope>
    <source>
        <strain>ATCC BAA-731 / CDC346-86 / RSK2980</strain>
    </source>
</reference>
<organism>
    <name type="scientific">Salmonella arizonae (strain ATCC BAA-731 / CDC346-86 / RSK2980)</name>
    <dbReference type="NCBI Taxonomy" id="41514"/>
    <lineage>
        <taxon>Bacteria</taxon>
        <taxon>Pseudomonadati</taxon>
        <taxon>Pseudomonadota</taxon>
        <taxon>Gammaproteobacteria</taxon>
        <taxon>Enterobacterales</taxon>
        <taxon>Enterobacteriaceae</taxon>
        <taxon>Salmonella</taxon>
    </lineage>
</organism>
<name>GCH1_SALAR</name>
<accession>A9MK63</accession>
<dbReference type="EC" id="3.5.4.16" evidence="1"/>
<dbReference type="EMBL" id="CP000880">
    <property type="protein sequence ID" value="ABX20622.1"/>
    <property type="molecule type" value="Genomic_DNA"/>
</dbReference>
<dbReference type="SMR" id="A9MK63"/>
<dbReference type="STRING" id="41514.SARI_00699"/>
<dbReference type="KEGG" id="ses:SARI_00699"/>
<dbReference type="HOGENOM" id="CLU_049768_3_2_6"/>
<dbReference type="UniPathway" id="UPA00848">
    <property type="reaction ID" value="UER00151"/>
</dbReference>
<dbReference type="Proteomes" id="UP000002084">
    <property type="component" value="Chromosome"/>
</dbReference>
<dbReference type="GO" id="GO:0005737">
    <property type="term" value="C:cytoplasm"/>
    <property type="evidence" value="ECO:0007669"/>
    <property type="project" value="TreeGrafter"/>
</dbReference>
<dbReference type="GO" id="GO:0005525">
    <property type="term" value="F:GTP binding"/>
    <property type="evidence" value="ECO:0007669"/>
    <property type="project" value="UniProtKB-KW"/>
</dbReference>
<dbReference type="GO" id="GO:0003934">
    <property type="term" value="F:GTP cyclohydrolase I activity"/>
    <property type="evidence" value="ECO:0007669"/>
    <property type="project" value="UniProtKB-UniRule"/>
</dbReference>
<dbReference type="GO" id="GO:0008270">
    <property type="term" value="F:zinc ion binding"/>
    <property type="evidence" value="ECO:0007669"/>
    <property type="project" value="UniProtKB-UniRule"/>
</dbReference>
<dbReference type="GO" id="GO:0006730">
    <property type="term" value="P:one-carbon metabolic process"/>
    <property type="evidence" value="ECO:0007669"/>
    <property type="project" value="UniProtKB-UniRule"/>
</dbReference>
<dbReference type="GO" id="GO:0006729">
    <property type="term" value="P:tetrahydrobiopterin biosynthetic process"/>
    <property type="evidence" value="ECO:0007669"/>
    <property type="project" value="TreeGrafter"/>
</dbReference>
<dbReference type="GO" id="GO:0046654">
    <property type="term" value="P:tetrahydrofolate biosynthetic process"/>
    <property type="evidence" value="ECO:0007669"/>
    <property type="project" value="UniProtKB-UniRule"/>
</dbReference>
<dbReference type="CDD" id="cd00642">
    <property type="entry name" value="GTP_cyclohydro1"/>
    <property type="match status" value="1"/>
</dbReference>
<dbReference type="FunFam" id="1.10.286.10:FF:000002">
    <property type="entry name" value="GTP cyclohydrolase 1"/>
    <property type="match status" value="1"/>
</dbReference>
<dbReference type="FunFam" id="3.30.1130.10:FF:000001">
    <property type="entry name" value="GTP cyclohydrolase 1"/>
    <property type="match status" value="1"/>
</dbReference>
<dbReference type="Gene3D" id="1.10.286.10">
    <property type="match status" value="1"/>
</dbReference>
<dbReference type="Gene3D" id="3.30.1130.10">
    <property type="match status" value="1"/>
</dbReference>
<dbReference type="HAMAP" id="MF_00223">
    <property type="entry name" value="FolE"/>
    <property type="match status" value="1"/>
</dbReference>
<dbReference type="InterPro" id="IPR043133">
    <property type="entry name" value="GTP-CH-I_C/QueF"/>
</dbReference>
<dbReference type="InterPro" id="IPR043134">
    <property type="entry name" value="GTP-CH-I_N"/>
</dbReference>
<dbReference type="InterPro" id="IPR001474">
    <property type="entry name" value="GTP_CycHdrlase_I"/>
</dbReference>
<dbReference type="InterPro" id="IPR018234">
    <property type="entry name" value="GTP_CycHdrlase_I_CS"/>
</dbReference>
<dbReference type="InterPro" id="IPR020602">
    <property type="entry name" value="GTP_CycHdrlase_I_dom"/>
</dbReference>
<dbReference type="NCBIfam" id="TIGR00063">
    <property type="entry name" value="folE"/>
    <property type="match status" value="1"/>
</dbReference>
<dbReference type="NCBIfam" id="NF006824">
    <property type="entry name" value="PRK09347.1-1"/>
    <property type="match status" value="1"/>
</dbReference>
<dbReference type="NCBIfam" id="NF006825">
    <property type="entry name" value="PRK09347.1-2"/>
    <property type="match status" value="1"/>
</dbReference>
<dbReference type="NCBIfam" id="NF006826">
    <property type="entry name" value="PRK09347.1-3"/>
    <property type="match status" value="1"/>
</dbReference>
<dbReference type="PANTHER" id="PTHR11109:SF7">
    <property type="entry name" value="GTP CYCLOHYDROLASE 1"/>
    <property type="match status" value="1"/>
</dbReference>
<dbReference type="PANTHER" id="PTHR11109">
    <property type="entry name" value="GTP CYCLOHYDROLASE I"/>
    <property type="match status" value="1"/>
</dbReference>
<dbReference type="Pfam" id="PF01227">
    <property type="entry name" value="GTP_cyclohydroI"/>
    <property type="match status" value="1"/>
</dbReference>
<dbReference type="SUPFAM" id="SSF55620">
    <property type="entry name" value="Tetrahydrobiopterin biosynthesis enzymes-like"/>
    <property type="match status" value="1"/>
</dbReference>
<dbReference type="PROSITE" id="PS00859">
    <property type="entry name" value="GTP_CYCLOHYDROL_1_1"/>
    <property type="match status" value="1"/>
</dbReference>
<dbReference type="PROSITE" id="PS00860">
    <property type="entry name" value="GTP_CYCLOHYDROL_1_2"/>
    <property type="match status" value="1"/>
</dbReference>
<comment type="catalytic activity">
    <reaction evidence="1">
        <text>GTP + H2O = 7,8-dihydroneopterin 3'-triphosphate + formate + H(+)</text>
        <dbReference type="Rhea" id="RHEA:17473"/>
        <dbReference type="ChEBI" id="CHEBI:15377"/>
        <dbReference type="ChEBI" id="CHEBI:15378"/>
        <dbReference type="ChEBI" id="CHEBI:15740"/>
        <dbReference type="ChEBI" id="CHEBI:37565"/>
        <dbReference type="ChEBI" id="CHEBI:58462"/>
        <dbReference type="EC" id="3.5.4.16"/>
    </reaction>
</comment>
<comment type="pathway">
    <text evidence="1">Cofactor biosynthesis; 7,8-dihydroneopterin triphosphate biosynthesis; 7,8-dihydroneopterin triphosphate from GTP: step 1/1.</text>
</comment>
<comment type="subunit">
    <text evidence="1">Homomer.</text>
</comment>
<comment type="similarity">
    <text evidence="1">Belongs to the GTP cyclohydrolase I family.</text>
</comment>